<comment type="function">
    <text evidence="1">F(1)F(0) ATP synthase produces ATP from ADP in the presence of a proton or sodium gradient. F-type ATPases consist of two structural domains, F(1) containing the extramembraneous catalytic core and F(0) containing the membrane proton channel, linked together by a central stalk and a peripheral stalk. During catalysis, ATP synthesis in the catalytic domain of F(1) is coupled via a rotary mechanism of the central stalk subunits to proton translocation.</text>
</comment>
<comment type="function">
    <text evidence="1">Key component of the F(0) channel; it plays a direct role in translocation across the membrane. A homomeric c-ring of between 10-14 subunits forms the central stalk rotor element with the F(1) delta and epsilon subunits.</text>
</comment>
<comment type="subunit">
    <text evidence="1">F-type ATPases have 2 components, F(1) - the catalytic core - and F(0) - the membrane proton channel. F(1) has five subunits: alpha(3), beta(3), gamma(1), delta(1), epsilon(1). F(0) has three main subunits: a(1), b(2) and c(10-14). The alpha and beta chains form an alternating ring which encloses part of the gamma chain. F(1) is attached to F(0) by a central stalk formed by the gamma and epsilon chains, while a peripheral stalk is formed by the delta and b chains.</text>
</comment>
<comment type="subcellular location">
    <subcellularLocation>
        <location evidence="1">Cell inner membrane</location>
        <topology evidence="1">Multi-pass membrane protein</topology>
    </subcellularLocation>
</comment>
<comment type="similarity">
    <text evidence="1">Belongs to the ATPase C chain family.</text>
</comment>
<gene>
    <name evidence="1" type="primary">atpE</name>
    <name type="ordered locus">PSPPH_5212</name>
</gene>
<protein>
    <recommendedName>
        <fullName evidence="1">ATP synthase subunit c</fullName>
    </recommendedName>
    <alternativeName>
        <fullName evidence="1">ATP synthase F(0) sector subunit c</fullName>
    </alternativeName>
    <alternativeName>
        <fullName evidence="1">F-type ATPase subunit c</fullName>
        <shortName evidence="1">F-ATPase subunit c</shortName>
    </alternativeName>
    <alternativeName>
        <fullName evidence="1">Lipid-binding protein</fullName>
    </alternativeName>
</protein>
<reference key="1">
    <citation type="journal article" date="2005" name="J. Bacteriol.">
        <title>Whole-genome sequence analysis of Pseudomonas syringae pv. phaseolicola 1448A reveals divergence among pathovars in genes involved in virulence and transposition.</title>
        <authorList>
            <person name="Joardar V."/>
            <person name="Lindeberg M."/>
            <person name="Jackson R.W."/>
            <person name="Selengut J."/>
            <person name="Dodson R."/>
            <person name="Brinkac L.M."/>
            <person name="Daugherty S.C."/>
            <person name="DeBoy R.T."/>
            <person name="Durkin A.S."/>
            <person name="Gwinn Giglio M."/>
            <person name="Madupu R."/>
            <person name="Nelson W.C."/>
            <person name="Rosovitz M.J."/>
            <person name="Sullivan S.A."/>
            <person name="Crabtree J."/>
            <person name="Creasy T."/>
            <person name="Davidsen T.M."/>
            <person name="Haft D.H."/>
            <person name="Zafar N."/>
            <person name="Zhou L."/>
            <person name="Halpin R."/>
            <person name="Holley T."/>
            <person name="Khouri H.M."/>
            <person name="Feldblyum T.V."/>
            <person name="White O."/>
            <person name="Fraser C.M."/>
            <person name="Chatterjee A.K."/>
            <person name="Cartinhour S."/>
            <person name="Schneider D."/>
            <person name="Mansfield J.W."/>
            <person name="Collmer A."/>
            <person name="Buell R."/>
        </authorList>
    </citation>
    <scope>NUCLEOTIDE SEQUENCE [LARGE SCALE GENOMIC DNA]</scope>
    <source>
        <strain>1448A / Race 6</strain>
    </source>
</reference>
<feature type="chain" id="PRO_1000184435" description="ATP synthase subunit c">
    <location>
        <begin position="1"/>
        <end position="85"/>
    </location>
</feature>
<feature type="transmembrane region" description="Helical" evidence="1">
    <location>
        <begin position="10"/>
        <end position="30"/>
    </location>
</feature>
<feature type="transmembrane region" description="Helical" evidence="1">
    <location>
        <begin position="53"/>
        <end position="73"/>
    </location>
</feature>
<feature type="site" description="Reversibly protonated during proton transport" evidence="1">
    <location>
        <position position="60"/>
    </location>
</feature>
<evidence type="ECO:0000255" key="1">
    <source>
        <dbReference type="HAMAP-Rule" id="MF_01396"/>
    </source>
</evidence>
<sequence>METVVGLTAIAVALLIGLGALGTAIGFGLLGGKFLEGAARQPEMVPMLQVKMFIVAGLLDAVTMIGVGIALFFTFANPFVGQLAG</sequence>
<keyword id="KW-0066">ATP synthesis</keyword>
<keyword id="KW-0997">Cell inner membrane</keyword>
<keyword id="KW-1003">Cell membrane</keyword>
<keyword id="KW-0138">CF(0)</keyword>
<keyword id="KW-0375">Hydrogen ion transport</keyword>
<keyword id="KW-0406">Ion transport</keyword>
<keyword id="KW-0446">Lipid-binding</keyword>
<keyword id="KW-0472">Membrane</keyword>
<keyword id="KW-0812">Transmembrane</keyword>
<keyword id="KW-1133">Transmembrane helix</keyword>
<keyword id="KW-0813">Transport</keyword>
<dbReference type="EMBL" id="CP000058">
    <property type="protein sequence ID" value="AAZ35731.1"/>
    <property type="molecule type" value="Genomic_DNA"/>
</dbReference>
<dbReference type="RefSeq" id="WP_002555987.1">
    <property type="nucleotide sequence ID" value="NC_005773.3"/>
</dbReference>
<dbReference type="SMR" id="Q48BG0"/>
<dbReference type="GeneID" id="97918854"/>
<dbReference type="KEGG" id="psp:PSPPH_5212"/>
<dbReference type="eggNOG" id="ENOG5032S3K">
    <property type="taxonomic scope" value="Bacteria"/>
</dbReference>
<dbReference type="HOGENOM" id="CLU_148047_1_0_6"/>
<dbReference type="Proteomes" id="UP000000551">
    <property type="component" value="Chromosome"/>
</dbReference>
<dbReference type="GO" id="GO:0005886">
    <property type="term" value="C:plasma membrane"/>
    <property type="evidence" value="ECO:0007669"/>
    <property type="project" value="UniProtKB-SubCell"/>
</dbReference>
<dbReference type="GO" id="GO:0045259">
    <property type="term" value="C:proton-transporting ATP synthase complex"/>
    <property type="evidence" value="ECO:0007669"/>
    <property type="project" value="UniProtKB-KW"/>
</dbReference>
<dbReference type="GO" id="GO:0033177">
    <property type="term" value="C:proton-transporting two-sector ATPase complex, proton-transporting domain"/>
    <property type="evidence" value="ECO:0007669"/>
    <property type="project" value="InterPro"/>
</dbReference>
<dbReference type="GO" id="GO:0008289">
    <property type="term" value="F:lipid binding"/>
    <property type="evidence" value="ECO:0007669"/>
    <property type="project" value="UniProtKB-KW"/>
</dbReference>
<dbReference type="GO" id="GO:0046933">
    <property type="term" value="F:proton-transporting ATP synthase activity, rotational mechanism"/>
    <property type="evidence" value="ECO:0007669"/>
    <property type="project" value="UniProtKB-UniRule"/>
</dbReference>
<dbReference type="CDD" id="cd18185">
    <property type="entry name" value="ATP-synt_Fo_c_ATPE"/>
    <property type="match status" value="1"/>
</dbReference>
<dbReference type="FunFam" id="1.20.20.10:FF:000002">
    <property type="entry name" value="ATP synthase subunit c"/>
    <property type="match status" value="1"/>
</dbReference>
<dbReference type="Gene3D" id="1.20.20.10">
    <property type="entry name" value="F1F0 ATP synthase subunit C"/>
    <property type="match status" value="1"/>
</dbReference>
<dbReference type="HAMAP" id="MF_01396">
    <property type="entry name" value="ATP_synth_c_bact"/>
    <property type="match status" value="1"/>
</dbReference>
<dbReference type="InterPro" id="IPR005953">
    <property type="entry name" value="ATP_synth_csu_bac/chlpt"/>
</dbReference>
<dbReference type="InterPro" id="IPR000454">
    <property type="entry name" value="ATP_synth_F0_csu"/>
</dbReference>
<dbReference type="InterPro" id="IPR020537">
    <property type="entry name" value="ATP_synth_F0_csu_DDCD_BS"/>
</dbReference>
<dbReference type="InterPro" id="IPR038662">
    <property type="entry name" value="ATP_synth_F0_csu_sf"/>
</dbReference>
<dbReference type="InterPro" id="IPR002379">
    <property type="entry name" value="ATPase_proteolipid_c-like_dom"/>
</dbReference>
<dbReference type="InterPro" id="IPR035921">
    <property type="entry name" value="F/V-ATP_Csub_sf"/>
</dbReference>
<dbReference type="NCBIfam" id="TIGR01260">
    <property type="entry name" value="ATP_synt_c"/>
    <property type="match status" value="1"/>
</dbReference>
<dbReference type="NCBIfam" id="NF005363">
    <property type="entry name" value="PRK06876.1"/>
    <property type="match status" value="1"/>
</dbReference>
<dbReference type="Pfam" id="PF00137">
    <property type="entry name" value="ATP-synt_C"/>
    <property type="match status" value="1"/>
</dbReference>
<dbReference type="PRINTS" id="PR00124">
    <property type="entry name" value="ATPASEC"/>
</dbReference>
<dbReference type="SUPFAM" id="SSF81333">
    <property type="entry name" value="F1F0 ATP synthase subunit C"/>
    <property type="match status" value="1"/>
</dbReference>
<dbReference type="PROSITE" id="PS00605">
    <property type="entry name" value="ATPASE_C"/>
    <property type="match status" value="1"/>
</dbReference>
<accession>Q48BG0</accession>
<organism>
    <name type="scientific">Pseudomonas savastanoi pv. phaseolicola (strain 1448A / Race 6)</name>
    <name type="common">Pseudomonas syringae pv. phaseolicola (strain 1448A / Race 6)</name>
    <dbReference type="NCBI Taxonomy" id="264730"/>
    <lineage>
        <taxon>Bacteria</taxon>
        <taxon>Pseudomonadati</taxon>
        <taxon>Pseudomonadota</taxon>
        <taxon>Gammaproteobacteria</taxon>
        <taxon>Pseudomonadales</taxon>
        <taxon>Pseudomonadaceae</taxon>
        <taxon>Pseudomonas</taxon>
    </lineage>
</organism>
<proteinExistence type="inferred from homology"/>
<name>ATPL_PSE14</name>